<name>MNMG_SALG2</name>
<organism>
    <name type="scientific">Salmonella gallinarum (strain 287/91 / NCTC 13346)</name>
    <dbReference type="NCBI Taxonomy" id="550538"/>
    <lineage>
        <taxon>Bacteria</taxon>
        <taxon>Pseudomonadati</taxon>
        <taxon>Pseudomonadota</taxon>
        <taxon>Gammaproteobacteria</taxon>
        <taxon>Enterobacterales</taxon>
        <taxon>Enterobacteriaceae</taxon>
        <taxon>Salmonella</taxon>
    </lineage>
</organism>
<sequence>MFYQDPFDVIIIGGGHAGTEAAMAAARMGQQTLLLTHNIDTLGQMSCNPAIGGIGKGHLVKEVDALGGLMAKAIDQAGIQFRILNASKGPAVRATRAQADRVLYRQAVRTALENQPNLMIFQQAVEDLIVENDRVVGAVTQMGLKFRAKAVVLTVGTFLDGKIHIGLDNYSGGRAGDPPSIPLSRRLRELPLRVSRLKTGTPPRIDARTIDFSVLAQQHGDNPMPVFSFMGNASQHPQQVPCYITHTNEKTHDVIRNNLDRSPMYAGVIEGIGPRYCPSIEDKVMRFADRNQHQIFLEPEGLTSNEIYPNGISTSLPFDVQMQIVRSMQGMENAKIVRPGYAIEYDFFDPRDLKPTLESKFIHGLFFAGQINGTTGYEEAAAQGLLAGLNAARLSADKEGWAPARSQAYLGVLVDDLCTLGTKEPYRMFTSRAEYRLMLREDNADLRLTEMGRELGLVDDERWARFNEKLESIERERQRLKSTWVTPSAESADEVNAHLTTPLSREASGEDLLRRPEMTYAQLTSLAAFAPALEDEQAAEQVEIQVKYEGYIARQQDEIEKQLRNENTLLPATLDYRQVSGLSNEVIAKLNDHKPASIGQASRISGVTPAAISILLVWLKKQGMLRRSA</sequence>
<gene>
    <name evidence="1" type="primary">mnmG</name>
    <name evidence="1" type="synonym">gidA</name>
    <name type="ordered locus">SG3559</name>
</gene>
<protein>
    <recommendedName>
        <fullName evidence="1">tRNA uridine 5-carboxymethylaminomethyl modification enzyme MnmG</fullName>
    </recommendedName>
    <alternativeName>
        <fullName evidence="1">Glucose-inhibited division protein A</fullName>
    </alternativeName>
</protein>
<feature type="chain" id="PRO_1000095662" description="tRNA uridine 5-carboxymethylaminomethyl modification enzyme MnmG">
    <location>
        <begin position="1"/>
        <end position="629"/>
    </location>
</feature>
<feature type="binding site" evidence="1">
    <location>
        <begin position="13"/>
        <end position="18"/>
    </location>
    <ligand>
        <name>FAD</name>
        <dbReference type="ChEBI" id="CHEBI:57692"/>
    </ligand>
</feature>
<feature type="binding site" evidence="1">
    <location>
        <position position="125"/>
    </location>
    <ligand>
        <name>FAD</name>
        <dbReference type="ChEBI" id="CHEBI:57692"/>
    </ligand>
</feature>
<feature type="binding site" evidence="1">
    <location>
        <position position="180"/>
    </location>
    <ligand>
        <name>FAD</name>
        <dbReference type="ChEBI" id="CHEBI:57692"/>
    </ligand>
</feature>
<feature type="binding site" evidence="1">
    <location>
        <begin position="273"/>
        <end position="287"/>
    </location>
    <ligand>
        <name>NAD(+)</name>
        <dbReference type="ChEBI" id="CHEBI:57540"/>
    </ligand>
</feature>
<feature type="binding site" evidence="1">
    <location>
        <position position="370"/>
    </location>
    <ligand>
        <name>FAD</name>
        <dbReference type="ChEBI" id="CHEBI:57692"/>
    </ligand>
</feature>
<proteinExistence type="inferred from homology"/>
<accession>B5RFV4</accession>
<reference key="1">
    <citation type="journal article" date="2008" name="Genome Res.">
        <title>Comparative genome analysis of Salmonella enteritidis PT4 and Salmonella gallinarum 287/91 provides insights into evolutionary and host adaptation pathways.</title>
        <authorList>
            <person name="Thomson N.R."/>
            <person name="Clayton D.J."/>
            <person name="Windhorst D."/>
            <person name="Vernikos G."/>
            <person name="Davidson S."/>
            <person name="Churcher C."/>
            <person name="Quail M.A."/>
            <person name="Stevens M."/>
            <person name="Jones M.A."/>
            <person name="Watson M."/>
            <person name="Barron A."/>
            <person name="Layton A."/>
            <person name="Pickard D."/>
            <person name="Kingsley R.A."/>
            <person name="Bignell A."/>
            <person name="Clark L."/>
            <person name="Harris B."/>
            <person name="Ormond D."/>
            <person name="Abdellah Z."/>
            <person name="Brooks K."/>
            <person name="Cherevach I."/>
            <person name="Chillingworth T."/>
            <person name="Woodward J."/>
            <person name="Norberczak H."/>
            <person name="Lord A."/>
            <person name="Arrowsmith C."/>
            <person name="Jagels K."/>
            <person name="Moule S."/>
            <person name="Mungall K."/>
            <person name="Saunders M."/>
            <person name="Whitehead S."/>
            <person name="Chabalgoity J.A."/>
            <person name="Maskell D."/>
            <person name="Humphreys T."/>
            <person name="Roberts M."/>
            <person name="Barrow P.A."/>
            <person name="Dougan G."/>
            <person name="Parkhill J."/>
        </authorList>
    </citation>
    <scope>NUCLEOTIDE SEQUENCE [LARGE SCALE GENOMIC DNA]</scope>
    <source>
        <strain>287/91 / NCTC 13346</strain>
    </source>
</reference>
<comment type="function">
    <text evidence="1">NAD-binding protein involved in the addition of a carboxymethylaminomethyl (cmnm) group at the wobble position (U34) of certain tRNAs, forming tRNA-cmnm(5)s(2)U34.</text>
</comment>
<comment type="cofactor">
    <cofactor evidence="1">
        <name>FAD</name>
        <dbReference type="ChEBI" id="CHEBI:57692"/>
    </cofactor>
</comment>
<comment type="subunit">
    <text evidence="1">Homodimer. Heterotetramer of two MnmE and two MnmG subunits.</text>
</comment>
<comment type="subcellular location">
    <subcellularLocation>
        <location evidence="1">Cytoplasm</location>
    </subcellularLocation>
</comment>
<comment type="similarity">
    <text evidence="1">Belongs to the MnmG family.</text>
</comment>
<dbReference type="EMBL" id="AM933173">
    <property type="protein sequence ID" value="CAR39348.1"/>
    <property type="molecule type" value="Genomic_DNA"/>
</dbReference>
<dbReference type="RefSeq" id="WP_000499875.1">
    <property type="nucleotide sequence ID" value="NC_011274.1"/>
</dbReference>
<dbReference type="SMR" id="B5RFV4"/>
<dbReference type="KEGG" id="seg:SG3559"/>
<dbReference type="HOGENOM" id="CLU_007831_2_2_6"/>
<dbReference type="Proteomes" id="UP000008321">
    <property type="component" value="Chromosome"/>
</dbReference>
<dbReference type="GO" id="GO:0005829">
    <property type="term" value="C:cytosol"/>
    <property type="evidence" value="ECO:0007669"/>
    <property type="project" value="TreeGrafter"/>
</dbReference>
<dbReference type="GO" id="GO:0050660">
    <property type="term" value="F:flavin adenine dinucleotide binding"/>
    <property type="evidence" value="ECO:0007669"/>
    <property type="project" value="UniProtKB-UniRule"/>
</dbReference>
<dbReference type="GO" id="GO:0030488">
    <property type="term" value="P:tRNA methylation"/>
    <property type="evidence" value="ECO:0007669"/>
    <property type="project" value="TreeGrafter"/>
</dbReference>
<dbReference type="GO" id="GO:0002098">
    <property type="term" value="P:tRNA wobble uridine modification"/>
    <property type="evidence" value="ECO:0007669"/>
    <property type="project" value="InterPro"/>
</dbReference>
<dbReference type="FunFam" id="1.10.10.1800:FF:000001">
    <property type="entry name" value="tRNA uridine 5-carboxymethylaminomethyl modification enzyme MnmG"/>
    <property type="match status" value="1"/>
</dbReference>
<dbReference type="FunFam" id="1.10.150.570:FF:000001">
    <property type="entry name" value="tRNA uridine 5-carboxymethylaminomethyl modification enzyme MnmG"/>
    <property type="match status" value="1"/>
</dbReference>
<dbReference type="FunFam" id="3.50.50.60:FF:000002">
    <property type="entry name" value="tRNA uridine 5-carboxymethylaminomethyl modification enzyme MnmG"/>
    <property type="match status" value="1"/>
</dbReference>
<dbReference type="FunFam" id="3.50.50.60:FF:000010">
    <property type="entry name" value="tRNA uridine 5-carboxymethylaminomethyl modification enzyme MnmG"/>
    <property type="match status" value="1"/>
</dbReference>
<dbReference type="Gene3D" id="3.50.50.60">
    <property type="entry name" value="FAD/NAD(P)-binding domain"/>
    <property type="match status" value="2"/>
</dbReference>
<dbReference type="Gene3D" id="1.10.150.570">
    <property type="entry name" value="GidA associated domain, C-terminal subdomain"/>
    <property type="match status" value="1"/>
</dbReference>
<dbReference type="Gene3D" id="1.10.10.1800">
    <property type="entry name" value="tRNA uridine 5-carboxymethylaminomethyl modification enzyme MnmG/GidA"/>
    <property type="match status" value="1"/>
</dbReference>
<dbReference type="HAMAP" id="MF_00129">
    <property type="entry name" value="MnmG_GidA"/>
    <property type="match status" value="1"/>
</dbReference>
<dbReference type="InterPro" id="IPR036188">
    <property type="entry name" value="FAD/NAD-bd_sf"/>
</dbReference>
<dbReference type="InterPro" id="IPR049312">
    <property type="entry name" value="GIDA_C_N"/>
</dbReference>
<dbReference type="InterPro" id="IPR004416">
    <property type="entry name" value="MnmG"/>
</dbReference>
<dbReference type="InterPro" id="IPR002218">
    <property type="entry name" value="MnmG-rel"/>
</dbReference>
<dbReference type="InterPro" id="IPR020595">
    <property type="entry name" value="MnmG-rel_CS"/>
</dbReference>
<dbReference type="InterPro" id="IPR026904">
    <property type="entry name" value="MnmG_C"/>
</dbReference>
<dbReference type="InterPro" id="IPR047001">
    <property type="entry name" value="MnmG_C_subdom"/>
</dbReference>
<dbReference type="InterPro" id="IPR044920">
    <property type="entry name" value="MnmG_C_subdom_sf"/>
</dbReference>
<dbReference type="InterPro" id="IPR040131">
    <property type="entry name" value="MnmG_N"/>
</dbReference>
<dbReference type="NCBIfam" id="TIGR00136">
    <property type="entry name" value="mnmG_gidA"/>
    <property type="match status" value="1"/>
</dbReference>
<dbReference type="PANTHER" id="PTHR11806">
    <property type="entry name" value="GLUCOSE INHIBITED DIVISION PROTEIN A"/>
    <property type="match status" value="1"/>
</dbReference>
<dbReference type="PANTHER" id="PTHR11806:SF0">
    <property type="entry name" value="PROTEIN MTO1 HOMOLOG, MITOCHONDRIAL"/>
    <property type="match status" value="1"/>
</dbReference>
<dbReference type="Pfam" id="PF01134">
    <property type="entry name" value="GIDA"/>
    <property type="match status" value="1"/>
</dbReference>
<dbReference type="Pfam" id="PF21680">
    <property type="entry name" value="GIDA_C_1st"/>
    <property type="match status" value="1"/>
</dbReference>
<dbReference type="Pfam" id="PF13932">
    <property type="entry name" value="SAM_GIDA_C"/>
    <property type="match status" value="1"/>
</dbReference>
<dbReference type="SMART" id="SM01228">
    <property type="entry name" value="GIDA_assoc_3"/>
    <property type="match status" value="1"/>
</dbReference>
<dbReference type="SUPFAM" id="SSF51905">
    <property type="entry name" value="FAD/NAD(P)-binding domain"/>
    <property type="match status" value="1"/>
</dbReference>
<dbReference type="PROSITE" id="PS01280">
    <property type="entry name" value="GIDA_1"/>
    <property type="match status" value="1"/>
</dbReference>
<dbReference type="PROSITE" id="PS01281">
    <property type="entry name" value="GIDA_2"/>
    <property type="match status" value="1"/>
</dbReference>
<evidence type="ECO:0000255" key="1">
    <source>
        <dbReference type="HAMAP-Rule" id="MF_00129"/>
    </source>
</evidence>
<keyword id="KW-0963">Cytoplasm</keyword>
<keyword id="KW-0274">FAD</keyword>
<keyword id="KW-0285">Flavoprotein</keyword>
<keyword id="KW-0520">NAD</keyword>
<keyword id="KW-0819">tRNA processing</keyword>